<name>LP9A_ASPKW</name>
<comment type="function">
    <text evidence="3">Lytic polysaccharide monooxygenase (LPMO) that depolymerizes crystalline and amorphous polysaccharides via the oxidation of scissile alpha- or beta-(1-4)-glycosidic bonds, yielding C4 oxidation products (By similarity). Catalysis by LPMOs requires the reduction of the active-site copper from Cu(II) to Cu(I) by a reducing agent and H(2)O(2) or O(2) as a cosubstrate (By similarity).</text>
</comment>
<comment type="catalytic activity">
    <reaction evidence="3">
        <text>[(1-&gt;4)-beta-D-glucosyl]n+m + reduced acceptor + O2 = 4-dehydro-beta-D-glucosyl-[(1-&gt;4)-beta-D-glucosyl]n-1 + [(1-&gt;4)-beta-D-glucosyl]m + acceptor + H2O.</text>
        <dbReference type="EC" id="1.14.99.56"/>
    </reaction>
</comment>
<comment type="cofactor">
    <cofactor evidence="4">
        <name>Cu(2+)</name>
        <dbReference type="ChEBI" id="CHEBI:29036"/>
    </cofactor>
    <text evidence="4">Binds 1 copper ion per subunit.</text>
</comment>
<comment type="subcellular location">
    <subcellularLocation>
        <location evidence="3">Secreted</location>
    </subcellularLocation>
</comment>
<comment type="domain">
    <text evidence="5">Has a modular structure: an endo-beta-1,4-glucanase catalytic module at the N-terminus, a linker rich in serines and threonines, and a C-terminal carbohydrate-binding module (CBM). The CBM domain is essential for binding to and subsequent oxidative degradation of polysaccharide substrate.</text>
</comment>
<comment type="biotechnology">
    <text evidence="4">Lignocellulose is the most abundant polymeric composite on Earth and is a recalcitrant but promising renewable substrate for industrial biotechnology applications. Together with cellobiose dehydrogenases (CDHs) an enzymatic system capable of oxidative cellulose cleavage is formed, which increases the efficiency of cellulases and put LPMOs at focus of biofuel research.</text>
</comment>
<comment type="similarity">
    <text evidence="8">Belongs to the polysaccharide monooxygenase AA9 family.</text>
</comment>
<keyword id="KW-0119">Carbohydrate metabolism</keyword>
<keyword id="KW-0136">Cellulose degradation</keyword>
<keyword id="KW-0186">Copper</keyword>
<keyword id="KW-1015">Disulfide bond</keyword>
<keyword id="KW-0325">Glycoprotein</keyword>
<keyword id="KW-0479">Metal-binding</keyword>
<keyword id="KW-0503">Monooxygenase</keyword>
<keyword id="KW-0560">Oxidoreductase</keyword>
<keyword id="KW-0624">Polysaccharide degradation</keyword>
<keyword id="KW-0964">Secreted</keyword>
<keyword id="KW-0732">Signal</keyword>
<accession>Q96WQ9</accession>
<accession>G7XU08</accession>
<proteinExistence type="inferred from homology"/>
<organism>
    <name type="scientific">Aspergillus kawachii (strain NBRC 4308)</name>
    <name type="common">White koji mold</name>
    <name type="synonym">Aspergillus awamori var. kawachi</name>
    <dbReference type="NCBI Taxonomy" id="1033177"/>
    <lineage>
        <taxon>Eukaryota</taxon>
        <taxon>Fungi</taxon>
        <taxon>Dikarya</taxon>
        <taxon>Ascomycota</taxon>
        <taxon>Pezizomycotina</taxon>
        <taxon>Eurotiomycetes</taxon>
        <taxon>Eurotiomycetidae</taxon>
        <taxon>Eurotiales</taxon>
        <taxon>Aspergillaceae</taxon>
        <taxon>Aspergillus</taxon>
        <taxon>Aspergillus subgen. Circumdati</taxon>
    </lineage>
</organism>
<dbReference type="EC" id="1.14.99.56" evidence="3"/>
<dbReference type="EMBL" id="AB055432">
    <property type="protein sequence ID" value="BAB62318.1"/>
    <property type="molecule type" value="Genomic_DNA"/>
</dbReference>
<dbReference type="EMBL" id="DF126473">
    <property type="protein sequence ID" value="GAA90417.1"/>
    <property type="molecule type" value="Genomic_DNA"/>
</dbReference>
<dbReference type="SMR" id="Q96WQ9"/>
<dbReference type="STRING" id="1033177.Q96WQ9"/>
<dbReference type="CAZy" id="AA9">
    <property type="family name" value="Auxiliary Activities 9"/>
</dbReference>
<dbReference type="CAZy" id="CBM1">
    <property type="family name" value="Carbohydrate-Binding Module Family 1"/>
</dbReference>
<dbReference type="GlyCosmos" id="Q96WQ9">
    <property type="glycosylation" value="3 sites, No reported glycans"/>
</dbReference>
<dbReference type="VEuPathDB" id="FungiDB:AKAW_08531"/>
<dbReference type="eggNOG" id="ENOG502QRTW">
    <property type="taxonomic scope" value="Eukaryota"/>
</dbReference>
<dbReference type="InParanoid" id="Q96WQ9"/>
<dbReference type="OrthoDB" id="114209at5052"/>
<dbReference type="GO" id="GO:0005576">
    <property type="term" value="C:extracellular region"/>
    <property type="evidence" value="ECO:0007669"/>
    <property type="project" value="UniProtKB-SubCell"/>
</dbReference>
<dbReference type="GO" id="GO:0008810">
    <property type="term" value="F:cellulase activity"/>
    <property type="evidence" value="ECO:0007669"/>
    <property type="project" value="UniProtKB-EC"/>
</dbReference>
<dbReference type="GO" id="GO:0030248">
    <property type="term" value="F:cellulose binding"/>
    <property type="evidence" value="ECO:0007669"/>
    <property type="project" value="InterPro"/>
</dbReference>
<dbReference type="GO" id="GO:0046872">
    <property type="term" value="F:metal ion binding"/>
    <property type="evidence" value="ECO:0007669"/>
    <property type="project" value="UniProtKB-KW"/>
</dbReference>
<dbReference type="GO" id="GO:0004497">
    <property type="term" value="F:monooxygenase activity"/>
    <property type="evidence" value="ECO:0007669"/>
    <property type="project" value="UniProtKB-KW"/>
</dbReference>
<dbReference type="GO" id="GO:0030245">
    <property type="term" value="P:cellulose catabolic process"/>
    <property type="evidence" value="ECO:0007669"/>
    <property type="project" value="UniProtKB-KW"/>
</dbReference>
<dbReference type="CDD" id="cd21175">
    <property type="entry name" value="LPMO_AA9"/>
    <property type="match status" value="1"/>
</dbReference>
<dbReference type="Gene3D" id="2.70.50.70">
    <property type="match status" value="1"/>
</dbReference>
<dbReference type="InterPro" id="IPR049892">
    <property type="entry name" value="AA9"/>
</dbReference>
<dbReference type="InterPro" id="IPR005103">
    <property type="entry name" value="AA9_LPMO"/>
</dbReference>
<dbReference type="InterPro" id="IPR035971">
    <property type="entry name" value="CBD_sf"/>
</dbReference>
<dbReference type="InterPro" id="IPR000254">
    <property type="entry name" value="Cellulose-bd_dom_fun"/>
</dbReference>
<dbReference type="PANTHER" id="PTHR33353:SF17">
    <property type="entry name" value="ENDO-BETA-1,4-GLUCANASE D"/>
    <property type="match status" value="1"/>
</dbReference>
<dbReference type="PANTHER" id="PTHR33353">
    <property type="entry name" value="PUTATIVE (AFU_ORTHOLOGUE AFUA_1G12560)-RELATED"/>
    <property type="match status" value="1"/>
</dbReference>
<dbReference type="Pfam" id="PF03443">
    <property type="entry name" value="AA9"/>
    <property type="match status" value="1"/>
</dbReference>
<dbReference type="Pfam" id="PF00734">
    <property type="entry name" value="CBM_1"/>
    <property type="match status" value="1"/>
</dbReference>
<dbReference type="SMART" id="SM00236">
    <property type="entry name" value="fCBD"/>
    <property type="match status" value="1"/>
</dbReference>
<dbReference type="SUPFAM" id="SSF57180">
    <property type="entry name" value="Cellulose-binding domain"/>
    <property type="match status" value="1"/>
</dbReference>
<dbReference type="PROSITE" id="PS00562">
    <property type="entry name" value="CBM1_1"/>
    <property type="match status" value="1"/>
</dbReference>
<dbReference type="PROSITE" id="PS51164">
    <property type="entry name" value="CBM1_2"/>
    <property type="match status" value="1"/>
</dbReference>
<feature type="signal peptide" evidence="6">
    <location>
        <begin position="1"/>
        <end position="20"/>
    </location>
</feature>
<feature type="chain" id="PRO_0000394064" description="AA9 family lytic polysaccharide monooxygenase A">
    <location>
        <begin position="21"/>
        <end position="408"/>
    </location>
</feature>
<feature type="domain" description="CBM1" evidence="7">
    <location>
        <begin position="369"/>
        <end position="405"/>
    </location>
</feature>
<feature type="binding site" evidence="1">
    <location>
        <position position="21"/>
    </location>
    <ligand>
        <name>Cu(2+)</name>
        <dbReference type="ChEBI" id="CHEBI:29036"/>
        <note>catalytic</note>
    </ligand>
</feature>
<feature type="binding site" evidence="1">
    <location>
        <position position="103"/>
    </location>
    <ligand>
        <name>Cu(2+)</name>
        <dbReference type="ChEBI" id="CHEBI:29036"/>
        <note>catalytic</note>
    </ligand>
</feature>
<feature type="binding site" evidence="2">
    <location>
        <position position="172"/>
    </location>
    <ligand>
        <name>O2</name>
        <dbReference type="ChEBI" id="CHEBI:15379"/>
    </ligand>
</feature>
<feature type="binding site" evidence="1">
    <location>
        <position position="183"/>
    </location>
    <ligand>
        <name>Cu(2+)</name>
        <dbReference type="ChEBI" id="CHEBI:29036"/>
        <note>catalytic</note>
    </ligand>
</feature>
<feature type="glycosylation site" description="N-linked (GlcNAc...) asparagine" evidence="6">
    <location>
        <position position="151"/>
    </location>
</feature>
<feature type="glycosylation site" description="N-linked (GlcNAc...) asparagine" evidence="6">
    <location>
        <position position="331"/>
    </location>
</feature>
<feature type="glycosylation site" description="N-linked (GlcNAc...) asparagine" evidence="6">
    <location>
        <position position="381"/>
    </location>
</feature>
<feature type="disulfide bond" evidence="1">
    <location>
        <begin position="63"/>
        <end position="186"/>
    </location>
</feature>
<gene>
    <name type="primary">eglD</name>
    <name type="synonym">cel61A</name>
    <name type="ORF">AKAW_08531</name>
</gene>
<evidence type="ECO:0000250" key="1">
    <source>
        <dbReference type="UniProtKB" id="A0A223GEC9"/>
    </source>
</evidence>
<evidence type="ECO:0000250" key="2">
    <source>
        <dbReference type="UniProtKB" id="Q1K8B6"/>
    </source>
</evidence>
<evidence type="ECO:0000250" key="3">
    <source>
        <dbReference type="UniProtKB" id="Q2US83"/>
    </source>
</evidence>
<evidence type="ECO:0000250" key="4">
    <source>
        <dbReference type="UniProtKB" id="Q4WP32"/>
    </source>
</evidence>
<evidence type="ECO:0000250" key="5">
    <source>
        <dbReference type="UniProtKB" id="Q7S439"/>
    </source>
</evidence>
<evidence type="ECO:0000255" key="6"/>
<evidence type="ECO:0000255" key="7">
    <source>
        <dbReference type="PROSITE-ProRule" id="PRU00597"/>
    </source>
</evidence>
<evidence type="ECO:0000305" key="8"/>
<sequence length="408" mass="41650">MKTTTYSLLALAAASKLASAHTTVQAVWINGEDQGLGNTDDGYIRSPPSNSPVTDVTSTDMTCNVNGDQAASKTLSVKAGDVVTFEWHHSDRSDSDDIIASSHKGPVQVYMAPTAKGSNGNNWVKIAEDGYHKSSDEWATDILIANKGKHNITVPDVPAGNYLFRPEIIALHEGNREGGAQFYMECVQFKVTSDGSNELPSGVSIPGVYTATDPGILFDIYNSFDSYPIPGPDVWDGSSSGSSSSGSSSAAVSSAAAAATTSAVAATTPATQAAVEVSSSAAAATTEAAAPVVSSAAPVQQATSAVTSQAQAAPTTFATSSKKSSKTACKNKTKSNSQVAAATSSVVAPAATSSVVPVVSASASASAGGVAKQYERCGGINHTGPTTCESGSVCKKWNPYYYQCVASQ</sequence>
<reference key="1">
    <citation type="journal article" date="2003" name="Biosci. Biotechnol. Biochem.">
        <title>Cloning and sequence analysis of endoglucanase genes from an industrial fungus, Aspergillus kawachii.</title>
        <authorList>
            <person name="Hara Y."/>
            <person name="Hinoki Y."/>
            <person name="Shimoi H."/>
            <person name="Ito K."/>
        </authorList>
    </citation>
    <scope>NUCLEOTIDE SEQUENCE [GENOMIC DNA]</scope>
    <source>
        <strain>NBRC 4308</strain>
    </source>
</reference>
<reference key="2">
    <citation type="journal article" date="2011" name="Eukaryot. Cell">
        <title>Genome sequence of the white koji mold Aspergillus kawachii IFO 4308, used for brewing the Japanese distilled spirit shochu.</title>
        <authorList>
            <person name="Futagami T."/>
            <person name="Mori K."/>
            <person name="Yamashita A."/>
            <person name="Wada S."/>
            <person name="Kajiwara Y."/>
            <person name="Takashita H."/>
            <person name="Omori T."/>
            <person name="Takegawa K."/>
            <person name="Tashiro K."/>
            <person name="Kuhara S."/>
            <person name="Goto M."/>
        </authorList>
    </citation>
    <scope>NUCLEOTIDE SEQUENCE [LARGE SCALE GENOMIC DNA]</scope>
    <source>
        <strain>NBRC 4308</strain>
    </source>
</reference>
<protein>
    <recommendedName>
        <fullName evidence="3">AA9 family lytic polysaccharide monooxygenase A</fullName>
        <shortName evidence="3">AA9A</shortName>
        <ecNumber evidence="3">1.14.99.56</ecNumber>
    </recommendedName>
    <alternativeName>
        <fullName evidence="8">Cellulase AA9A</fullName>
    </alternativeName>
    <alternativeName>
        <fullName evidence="8">Endo-beta-1,4-glucanase AA9A</fullName>
        <shortName evidence="8">Endoglucanase AA9A</shortName>
    </alternativeName>
    <alternativeName>
        <fullName evidence="8">Glycosyl hydrolase 61 family protein AA9A</fullName>
    </alternativeName>
</protein>